<dbReference type="EC" id="7.4.2.11" evidence="1"/>
<dbReference type="EMBL" id="BX950851">
    <property type="protein sequence ID" value="CAG74965.1"/>
    <property type="molecule type" value="Genomic_DNA"/>
</dbReference>
<dbReference type="RefSeq" id="WP_011093625.1">
    <property type="nucleotide sequence ID" value="NC_004547.2"/>
</dbReference>
<dbReference type="SMR" id="Q6D5H7"/>
<dbReference type="STRING" id="218491.ECA2063"/>
<dbReference type="KEGG" id="eca:ECA2063"/>
<dbReference type="PATRIC" id="fig|218491.5.peg.2101"/>
<dbReference type="eggNOG" id="COG1135">
    <property type="taxonomic scope" value="Bacteria"/>
</dbReference>
<dbReference type="HOGENOM" id="CLU_000604_1_3_6"/>
<dbReference type="OrthoDB" id="9802264at2"/>
<dbReference type="Proteomes" id="UP000007966">
    <property type="component" value="Chromosome"/>
</dbReference>
<dbReference type="GO" id="GO:0005886">
    <property type="term" value="C:plasma membrane"/>
    <property type="evidence" value="ECO:0007669"/>
    <property type="project" value="UniProtKB-SubCell"/>
</dbReference>
<dbReference type="GO" id="GO:0033232">
    <property type="term" value="F:ABC-type D-methionine transporter activity"/>
    <property type="evidence" value="ECO:0007669"/>
    <property type="project" value="UniProtKB-EC"/>
</dbReference>
<dbReference type="GO" id="GO:0005524">
    <property type="term" value="F:ATP binding"/>
    <property type="evidence" value="ECO:0007669"/>
    <property type="project" value="UniProtKB-KW"/>
</dbReference>
<dbReference type="GO" id="GO:0016887">
    <property type="term" value="F:ATP hydrolysis activity"/>
    <property type="evidence" value="ECO:0007669"/>
    <property type="project" value="InterPro"/>
</dbReference>
<dbReference type="CDD" id="cd03258">
    <property type="entry name" value="ABC_MetN_methionine_transporter"/>
    <property type="match status" value="1"/>
</dbReference>
<dbReference type="FunFam" id="3.40.50.300:FF:000056">
    <property type="entry name" value="Cell division ATP-binding protein FtsE"/>
    <property type="match status" value="1"/>
</dbReference>
<dbReference type="Gene3D" id="3.30.70.260">
    <property type="match status" value="1"/>
</dbReference>
<dbReference type="Gene3D" id="3.40.50.300">
    <property type="entry name" value="P-loop containing nucleotide triphosphate hydrolases"/>
    <property type="match status" value="1"/>
</dbReference>
<dbReference type="InterPro" id="IPR003593">
    <property type="entry name" value="AAA+_ATPase"/>
</dbReference>
<dbReference type="InterPro" id="IPR003439">
    <property type="entry name" value="ABC_transporter-like_ATP-bd"/>
</dbReference>
<dbReference type="InterPro" id="IPR017871">
    <property type="entry name" value="ABC_transporter-like_CS"/>
</dbReference>
<dbReference type="InterPro" id="IPR045865">
    <property type="entry name" value="ACT-like_dom_sf"/>
</dbReference>
<dbReference type="InterPro" id="IPR041701">
    <property type="entry name" value="MetN_ABC"/>
</dbReference>
<dbReference type="InterPro" id="IPR050086">
    <property type="entry name" value="MetN_ABC_transporter-like"/>
</dbReference>
<dbReference type="InterPro" id="IPR018449">
    <property type="entry name" value="NIL_domain"/>
</dbReference>
<dbReference type="InterPro" id="IPR027417">
    <property type="entry name" value="P-loop_NTPase"/>
</dbReference>
<dbReference type="PANTHER" id="PTHR43166">
    <property type="entry name" value="AMINO ACID IMPORT ATP-BINDING PROTEIN"/>
    <property type="match status" value="1"/>
</dbReference>
<dbReference type="PANTHER" id="PTHR43166:SF30">
    <property type="entry name" value="METHIONINE IMPORT ATP-BINDING PROTEIN METN"/>
    <property type="match status" value="1"/>
</dbReference>
<dbReference type="Pfam" id="PF00005">
    <property type="entry name" value="ABC_tran"/>
    <property type="match status" value="1"/>
</dbReference>
<dbReference type="Pfam" id="PF09383">
    <property type="entry name" value="NIL"/>
    <property type="match status" value="1"/>
</dbReference>
<dbReference type="SMART" id="SM00382">
    <property type="entry name" value="AAA"/>
    <property type="match status" value="1"/>
</dbReference>
<dbReference type="SMART" id="SM00930">
    <property type="entry name" value="NIL"/>
    <property type="match status" value="1"/>
</dbReference>
<dbReference type="SUPFAM" id="SSF55021">
    <property type="entry name" value="ACT-like"/>
    <property type="match status" value="1"/>
</dbReference>
<dbReference type="SUPFAM" id="SSF52540">
    <property type="entry name" value="P-loop containing nucleoside triphosphate hydrolases"/>
    <property type="match status" value="1"/>
</dbReference>
<dbReference type="PROSITE" id="PS00211">
    <property type="entry name" value="ABC_TRANSPORTER_1"/>
    <property type="match status" value="1"/>
</dbReference>
<dbReference type="PROSITE" id="PS50893">
    <property type="entry name" value="ABC_TRANSPORTER_2"/>
    <property type="match status" value="1"/>
</dbReference>
<dbReference type="PROSITE" id="PS51264">
    <property type="entry name" value="METN"/>
    <property type="match status" value="1"/>
</dbReference>
<comment type="function">
    <text evidence="1">Part of the ABC transporter complex MetNIQ involved in methionine import. Responsible for energy coupling to the transport system.</text>
</comment>
<comment type="catalytic activity">
    <reaction evidence="1">
        <text>L-methionine(out) + ATP + H2O = L-methionine(in) + ADP + phosphate + H(+)</text>
        <dbReference type="Rhea" id="RHEA:29779"/>
        <dbReference type="ChEBI" id="CHEBI:15377"/>
        <dbReference type="ChEBI" id="CHEBI:15378"/>
        <dbReference type="ChEBI" id="CHEBI:30616"/>
        <dbReference type="ChEBI" id="CHEBI:43474"/>
        <dbReference type="ChEBI" id="CHEBI:57844"/>
        <dbReference type="ChEBI" id="CHEBI:456216"/>
        <dbReference type="EC" id="7.4.2.11"/>
    </reaction>
</comment>
<comment type="catalytic activity">
    <reaction evidence="1">
        <text>D-methionine(out) + ATP + H2O = D-methionine(in) + ADP + phosphate + H(+)</text>
        <dbReference type="Rhea" id="RHEA:29767"/>
        <dbReference type="ChEBI" id="CHEBI:15377"/>
        <dbReference type="ChEBI" id="CHEBI:15378"/>
        <dbReference type="ChEBI" id="CHEBI:30616"/>
        <dbReference type="ChEBI" id="CHEBI:43474"/>
        <dbReference type="ChEBI" id="CHEBI:57932"/>
        <dbReference type="ChEBI" id="CHEBI:456216"/>
        <dbReference type="EC" id="7.4.2.11"/>
    </reaction>
</comment>
<comment type="subunit">
    <text evidence="1">The complex is composed of two ATP-binding proteins (MetN), two transmembrane proteins (MetI) and a solute-binding protein (MetQ).</text>
</comment>
<comment type="subcellular location">
    <subcellularLocation>
        <location evidence="1">Cell inner membrane</location>
        <topology evidence="1">Peripheral membrane protein</topology>
    </subcellularLocation>
</comment>
<comment type="similarity">
    <text evidence="1">Belongs to the ABC transporter superfamily. Methionine importer (TC 3.A.1.24) family.</text>
</comment>
<accession>Q6D5H7</accession>
<proteinExistence type="inferred from homology"/>
<name>METN1_PECAS</name>
<gene>
    <name evidence="1" type="primary">metN1</name>
    <name type="ordered locus">ECA2063</name>
</gene>
<organism>
    <name type="scientific">Pectobacterium atrosepticum (strain SCRI 1043 / ATCC BAA-672)</name>
    <name type="common">Erwinia carotovora subsp. atroseptica</name>
    <dbReference type="NCBI Taxonomy" id="218491"/>
    <lineage>
        <taxon>Bacteria</taxon>
        <taxon>Pseudomonadati</taxon>
        <taxon>Pseudomonadota</taxon>
        <taxon>Gammaproteobacteria</taxon>
        <taxon>Enterobacterales</taxon>
        <taxon>Pectobacteriaceae</taxon>
        <taxon>Pectobacterium</taxon>
    </lineage>
</organism>
<reference key="1">
    <citation type="journal article" date="2004" name="Proc. Natl. Acad. Sci. U.S.A.">
        <title>Genome sequence of the enterobacterial phytopathogen Erwinia carotovora subsp. atroseptica and characterization of virulence factors.</title>
        <authorList>
            <person name="Bell K.S."/>
            <person name="Sebaihia M."/>
            <person name="Pritchard L."/>
            <person name="Holden M.T.G."/>
            <person name="Hyman L.J."/>
            <person name="Holeva M.C."/>
            <person name="Thomson N.R."/>
            <person name="Bentley S.D."/>
            <person name="Churcher L.J.C."/>
            <person name="Mungall K."/>
            <person name="Atkin R."/>
            <person name="Bason N."/>
            <person name="Brooks K."/>
            <person name="Chillingworth T."/>
            <person name="Clark K."/>
            <person name="Doggett J."/>
            <person name="Fraser A."/>
            <person name="Hance Z."/>
            <person name="Hauser H."/>
            <person name="Jagels K."/>
            <person name="Moule S."/>
            <person name="Norbertczak H."/>
            <person name="Ormond D."/>
            <person name="Price C."/>
            <person name="Quail M.A."/>
            <person name="Sanders M."/>
            <person name="Walker D."/>
            <person name="Whitehead S."/>
            <person name="Salmond G.P.C."/>
            <person name="Birch P.R.J."/>
            <person name="Parkhill J."/>
            <person name="Toth I.K."/>
        </authorList>
    </citation>
    <scope>NUCLEOTIDE SEQUENCE [LARGE SCALE GENOMIC DNA]</scope>
    <source>
        <strain>SCRI 1043 / ATCC BAA-672</strain>
    </source>
</reference>
<evidence type="ECO:0000255" key="1">
    <source>
        <dbReference type="HAMAP-Rule" id="MF_01719"/>
    </source>
</evidence>
<keyword id="KW-0029">Amino-acid transport</keyword>
<keyword id="KW-0067">ATP-binding</keyword>
<keyword id="KW-0997">Cell inner membrane</keyword>
<keyword id="KW-1003">Cell membrane</keyword>
<keyword id="KW-0472">Membrane</keyword>
<keyword id="KW-0547">Nucleotide-binding</keyword>
<keyword id="KW-1185">Reference proteome</keyword>
<keyword id="KW-1278">Translocase</keyword>
<keyword id="KW-0813">Transport</keyword>
<protein>
    <recommendedName>
        <fullName evidence="1">Methionine import ATP-binding protein MetN 1</fullName>
        <ecNumber evidence="1">7.4.2.11</ecNumber>
    </recommendedName>
</protein>
<feature type="chain" id="PRO_0000270294" description="Methionine import ATP-binding protein MetN 1">
    <location>
        <begin position="1"/>
        <end position="340"/>
    </location>
</feature>
<feature type="domain" description="ABC transporter" evidence="1">
    <location>
        <begin position="2"/>
        <end position="242"/>
    </location>
</feature>
<feature type="binding site" evidence="1">
    <location>
        <begin position="39"/>
        <end position="46"/>
    </location>
    <ligand>
        <name>ATP</name>
        <dbReference type="ChEBI" id="CHEBI:30616"/>
    </ligand>
</feature>
<sequence>MIRLENVSVDFPAGKDAQSRAVNNVNLTIQQGEVFGIVGTSGAGKSTLLRTINLLQRPTEGRVFLGDTLISDASGRELRQHRQRIGMIFQHFNLMHTRNVYDNVAFSLRAAGKSKEEIASRVPEILALVGLQDKEASYPAQLSGGQKQRVGIARAIANHPEVLLCDEPTSALDLETSASILALLKSINVRLGITIVLISHEMSVIKSICQRMAVMTGGNIVEEGEVFTIFSAPQHAYTKQLVSHTTPIELPERFKQNNKGVLLKILFADDSVEQPILSDVAQRFQVSVNILHGNIEYINDRALGHIIAQISYRDDPAAENLAAAITYIRQNTFGVEVIND</sequence>